<proteinExistence type="inferred from homology"/>
<accession>P0A1J8</accession>
<accession>P37406</accession>
<feature type="chain" id="PRO_0000180868" description="Flagella synthesis protein FlgN">
    <location>
        <begin position="1"/>
        <end position="140"/>
    </location>
</feature>
<feature type="region of interest" description="Disordered" evidence="2">
    <location>
        <begin position="119"/>
        <end position="140"/>
    </location>
</feature>
<keyword id="KW-1005">Bacterial flagellum biogenesis</keyword>
<keyword id="KW-0963">Cytoplasm</keyword>
<gene>
    <name type="primary">flgN</name>
    <name type="ordered locus">STY1210</name>
    <name type="ordered locus">t1749</name>
</gene>
<organism>
    <name type="scientific">Salmonella typhi</name>
    <dbReference type="NCBI Taxonomy" id="90370"/>
    <lineage>
        <taxon>Bacteria</taxon>
        <taxon>Pseudomonadati</taxon>
        <taxon>Pseudomonadota</taxon>
        <taxon>Gammaproteobacteria</taxon>
        <taxon>Enterobacterales</taxon>
        <taxon>Enterobacteriaceae</taxon>
        <taxon>Salmonella</taxon>
    </lineage>
</organism>
<reference key="1">
    <citation type="journal article" date="2001" name="Nature">
        <title>Complete genome sequence of a multiple drug resistant Salmonella enterica serovar Typhi CT18.</title>
        <authorList>
            <person name="Parkhill J."/>
            <person name="Dougan G."/>
            <person name="James K.D."/>
            <person name="Thomson N.R."/>
            <person name="Pickard D."/>
            <person name="Wain J."/>
            <person name="Churcher C.M."/>
            <person name="Mungall K.L."/>
            <person name="Bentley S.D."/>
            <person name="Holden M.T.G."/>
            <person name="Sebaihia M."/>
            <person name="Baker S."/>
            <person name="Basham D."/>
            <person name="Brooks K."/>
            <person name="Chillingworth T."/>
            <person name="Connerton P."/>
            <person name="Cronin A."/>
            <person name="Davis P."/>
            <person name="Davies R.M."/>
            <person name="Dowd L."/>
            <person name="White N."/>
            <person name="Farrar J."/>
            <person name="Feltwell T."/>
            <person name="Hamlin N."/>
            <person name="Haque A."/>
            <person name="Hien T.T."/>
            <person name="Holroyd S."/>
            <person name="Jagels K."/>
            <person name="Krogh A."/>
            <person name="Larsen T.S."/>
            <person name="Leather S."/>
            <person name="Moule S."/>
            <person name="O'Gaora P."/>
            <person name="Parry C."/>
            <person name="Quail M.A."/>
            <person name="Rutherford K.M."/>
            <person name="Simmonds M."/>
            <person name="Skelton J."/>
            <person name="Stevens K."/>
            <person name="Whitehead S."/>
            <person name="Barrell B.G."/>
        </authorList>
    </citation>
    <scope>NUCLEOTIDE SEQUENCE [LARGE SCALE GENOMIC DNA]</scope>
    <source>
        <strain>CT18</strain>
    </source>
</reference>
<reference key="2">
    <citation type="journal article" date="2003" name="J. Bacteriol.">
        <title>Comparative genomics of Salmonella enterica serovar Typhi strains Ty2 and CT18.</title>
        <authorList>
            <person name="Deng W."/>
            <person name="Liou S.-R."/>
            <person name="Plunkett G. III"/>
            <person name="Mayhew G.F."/>
            <person name="Rose D.J."/>
            <person name="Burland V."/>
            <person name="Kodoyianni V."/>
            <person name="Schwartz D.C."/>
            <person name="Blattner F.R."/>
        </authorList>
    </citation>
    <scope>NUCLEOTIDE SEQUENCE [LARGE SCALE GENOMIC DNA]</scope>
    <source>
        <strain>ATCC 700931 / Ty2</strain>
    </source>
</reference>
<sequence length="140" mass="15989">MTRLSEILDQMTTVLNDLKTVMDAEQQQLSVGQINGSQLQRITEEKSSLLATLDYLEQQRRLEQNAQRSANDDIAERWQAITEKTQHLRDLNQHNGWLLEGQIERNQQALEVLKPHQEPTLYGADGQTSVSHRGGKKISI</sequence>
<comment type="function">
    <text evidence="1">Required for the efficient initiation of filament assembly.</text>
</comment>
<comment type="subcellular location">
    <subcellularLocation>
        <location evidence="3">Cytoplasm</location>
    </subcellularLocation>
</comment>
<comment type="similarity">
    <text evidence="3">Belongs to the FlgN family.</text>
</comment>
<name>FLGN_SALTI</name>
<dbReference type="EMBL" id="AL513382">
    <property type="protein sequence ID" value="CAD08295.1"/>
    <property type="molecule type" value="Genomic_DNA"/>
</dbReference>
<dbReference type="EMBL" id="AE014613">
    <property type="protein sequence ID" value="AAO69373.1"/>
    <property type="molecule type" value="Genomic_DNA"/>
</dbReference>
<dbReference type="RefSeq" id="NP_455664.1">
    <property type="nucleotide sequence ID" value="NC_003198.1"/>
</dbReference>
<dbReference type="RefSeq" id="WP_000197547.1">
    <property type="nucleotide sequence ID" value="NZ_WSUR01000018.1"/>
</dbReference>
<dbReference type="SMR" id="P0A1J8"/>
<dbReference type="STRING" id="220341.gene:17585175"/>
<dbReference type="KEGG" id="stt:t1749"/>
<dbReference type="KEGG" id="sty:STY1210"/>
<dbReference type="PATRIC" id="fig|220341.7.peg.1211"/>
<dbReference type="eggNOG" id="COG3418">
    <property type="taxonomic scope" value="Bacteria"/>
</dbReference>
<dbReference type="HOGENOM" id="CLU_137423_2_1_6"/>
<dbReference type="OMA" id="HIEHNTQ"/>
<dbReference type="OrthoDB" id="6462803at2"/>
<dbReference type="Proteomes" id="UP000000541">
    <property type="component" value="Chromosome"/>
</dbReference>
<dbReference type="Proteomes" id="UP000002670">
    <property type="component" value="Chromosome"/>
</dbReference>
<dbReference type="GO" id="GO:0005737">
    <property type="term" value="C:cytoplasm"/>
    <property type="evidence" value="ECO:0007669"/>
    <property type="project" value="UniProtKB-SubCell"/>
</dbReference>
<dbReference type="GO" id="GO:0044780">
    <property type="term" value="P:bacterial-type flagellum assembly"/>
    <property type="evidence" value="ECO:0007669"/>
    <property type="project" value="InterPro"/>
</dbReference>
<dbReference type="Gene3D" id="1.20.58.300">
    <property type="entry name" value="FlgN-like"/>
    <property type="match status" value="1"/>
</dbReference>
<dbReference type="InterPro" id="IPR007809">
    <property type="entry name" value="FlgN-like"/>
</dbReference>
<dbReference type="InterPro" id="IPR036679">
    <property type="entry name" value="FlgN-like_sf"/>
</dbReference>
<dbReference type="NCBIfam" id="NF012003">
    <property type="entry name" value="PRK15459.1"/>
    <property type="match status" value="1"/>
</dbReference>
<dbReference type="Pfam" id="PF05130">
    <property type="entry name" value="FlgN"/>
    <property type="match status" value="1"/>
</dbReference>
<dbReference type="SUPFAM" id="SSF140566">
    <property type="entry name" value="FlgN-like"/>
    <property type="match status" value="1"/>
</dbReference>
<evidence type="ECO:0000250" key="1"/>
<evidence type="ECO:0000256" key="2">
    <source>
        <dbReference type="SAM" id="MobiDB-lite"/>
    </source>
</evidence>
<evidence type="ECO:0000305" key="3"/>
<protein>
    <recommendedName>
        <fullName>Flagella synthesis protein FlgN</fullName>
    </recommendedName>
</protein>